<comment type="function">
    <text evidence="2">Has low D-gluconate dehydratase activity (in vitro), suggesting that it has no significant role in D-gluconate degradation in vivo. Has no detectable activity with a panel of 70 other acid sugars (in vitro).</text>
</comment>
<comment type="catalytic activity">
    <reaction evidence="2">
        <text>D-gluconate = 2-dehydro-3-deoxy-D-gluconate + H2O</text>
        <dbReference type="Rhea" id="RHEA:21612"/>
        <dbReference type="ChEBI" id="CHEBI:15377"/>
        <dbReference type="ChEBI" id="CHEBI:18391"/>
        <dbReference type="ChEBI" id="CHEBI:57990"/>
        <dbReference type="EC" id="4.2.1.39"/>
    </reaction>
</comment>
<comment type="cofactor">
    <cofactor evidence="2">
        <name>Mg(2+)</name>
        <dbReference type="ChEBI" id="CHEBI:18420"/>
    </cofactor>
    <text evidence="2">Binds 1 Mg(2+) ion per subunit.</text>
</comment>
<comment type="biophysicochemical properties">
    <kinetics>
        <text evidence="2">kcat is 0.04 sec(-1) with D-gluconate.</text>
    </kinetics>
</comment>
<comment type="similarity">
    <text evidence="3">Belongs to the mandelate racemase/muconate lactonizing enzyme family. GalD subfamily.</text>
</comment>
<accession>D4GJ14</accession>
<gene>
    <name type="primary">rspA</name>
    <name type="ordered locus">PANA_0592</name>
</gene>
<reference key="1">
    <citation type="journal article" date="2010" name="J. Bacteriol.">
        <title>Genome sequence of Pantoea ananatis LMG20103, the causative agent of Eucalyptus blight and dieback.</title>
        <authorList>
            <person name="De Maayer P."/>
            <person name="Chan W.Y."/>
            <person name="Venter S.N."/>
            <person name="Toth I.K."/>
            <person name="Birch P.R."/>
            <person name="Joubert F."/>
            <person name="Coutinho T.A."/>
        </authorList>
    </citation>
    <scope>NUCLEOTIDE SEQUENCE [LARGE SCALE GENOMIC DNA]</scope>
    <source>
        <strain>LMG 20103</strain>
    </source>
</reference>
<reference key="2">
    <citation type="journal article" date="2014" name="Biochemistry">
        <title>Discovery of function in the enolase superfamily: D-mannonate and D-gluconate dehydratases in the D-mannonate dehydratase subgroup.</title>
        <authorList>
            <person name="Wichelecki D.J."/>
            <person name="Balthazor B.M."/>
            <person name="Chau A.C."/>
            <person name="Vetting M.W."/>
            <person name="Fedorov A.A."/>
            <person name="Fedorov E.V."/>
            <person name="Lukk T."/>
            <person name="Patskovsky Y.V."/>
            <person name="Stead M.B."/>
            <person name="Hillerich B.S."/>
            <person name="Seidel R.D."/>
            <person name="Almo S.C."/>
            <person name="Gerlt J.A."/>
        </authorList>
    </citation>
    <scope>X-RAY CRYSTALLOGRAPHY (1.60 ANGSTROMS) IN COMPLEX WITH MAGNESIUM AND D-GLUCONATE</scope>
    <scope>FUNCTION</scope>
    <scope>CATALYTIC ACTIVITY</scope>
    <scope>COFACTOR</scope>
    <scope>BIOPHYSICOCHEMICAL PROPERTIES</scope>
    <source>
        <strain>LMG 20103</strain>
    </source>
</reference>
<organism>
    <name type="scientific">Pantoea ananatis (strain LMG 20103)</name>
    <dbReference type="NCBI Taxonomy" id="706191"/>
    <lineage>
        <taxon>Bacteria</taxon>
        <taxon>Pseudomonadati</taxon>
        <taxon>Pseudomonadota</taxon>
        <taxon>Gammaproteobacteria</taxon>
        <taxon>Enterobacterales</taxon>
        <taxon>Erwiniaceae</taxon>
        <taxon>Pantoea</taxon>
    </lineage>
</organism>
<sequence length="417" mass="46135">MSNLFITNVKTILTAPGGIDLVVVKIETNEPGLYGLGCATFTQRIYAVQSAIDEYLAPFLIGKDPARIEDIWQSAAVSGYWRNGPVMNNALSGIDMALWDIKGKQAGLPVYELLGGKCRDGIALYVHTDGADEVEVEDSARAKMEEGYQYIRCQMGMYGGAGTDDLRLIANRMVKAKNIQPKRSPRTKAPGIYFDPEAYAKSIPRLFDHLRNKLGFSVELLHDAHERITPINAIHMAKALEPYQLFFLEDPVAPENTEWLKMLRQQSSTPIAMGELFVNVNEWKPLIDNKLIDYIRCHISSIGGITPAKKIAIYSELNGVRTAWHSPGDISPIGVCANMHLDLSSPNFGIQEYTPMNDALREVFPGCPEVDQGYAYVNDKPGLGIDINEALAAKFPCEGGNPTWTMARTPDGTVWRP</sequence>
<proteinExistence type="evidence at protein level"/>
<name>DGD_PANAM</name>
<dbReference type="EC" id="4.2.1.-"/>
<dbReference type="EC" id="4.2.1.39"/>
<dbReference type="EMBL" id="CP001875">
    <property type="protein sequence ID" value="ADD75759.1"/>
    <property type="molecule type" value="Genomic_DNA"/>
</dbReference>
<dbReference type="RefSeq" id="WP_013024487.1">
    <property type="nucleotide sequence ID" value="NC_013956.2"/>
</dbReference>
<dbReference type="PDB" id="3T6C">
    <property type="method" value="X-ray"/>
    <property type="resolution" value="1.60 A"/>
    <property type="chains" value="A/B=1-417"/>
</dbReference>
<dbReference type="PDBsum" id="3T6C"/>
<dbReference type="SMR" id="D4GJ14"/>
<dbReference type="STRING" id="706191.PANA_0592"/>
<dbReference type="KEGG" id="pam:PANA_0592"/>
<dbReference type="eggNOG" id="COG4948">
    <property type="taxonomic scope" value="Bacteria"/>
</dbReference>
<dbReference type="HOGENOM" id="CLU_030273_6_1_6"/>
<dbReference type="EvolutionaryTrace" id="D4GJ14"/>
<dbReference type="Proteomes" id="UP000001702">
    <property type="component" value="Chromosome"/>
</dbReference>
<dbReference type="GO" id="GO:0047929">
    <property type="term" value="F:gluconate dehydratase activity"/>
    <property type="evidence" value="ECO:0000314"/>
    <property type="project" value="UniProtKB"/>
</dbReference>
<dbReference type="GO" id="GO:0000287">
    <property type="term" value="F:magnesium ion binding"/>
    <property type="evidence" value="ECO:0000314"/>
    <property type="project" value="UniProtKB"/>
</dbReference>
<dbReference type="GO" id="GO:0009063">
    <property type="term" value="P:amino acid catabolic process"/>
    <property type="evidence" value="ECO:0007669"/>
    <property type="project" value="InterPro"/>
</dbReference>
<dbReference type="GO" id="GO:0016052">
    <property type="term" value="P:carbohydrate catabolic process"/>
    <property type="evidence" value="ECO:0000314"/>
    <property type="project" value="UniProtKB"/>
</dbReference>
<dbReference type="FunFam" id="3.20.20.120:FF:000011">
    <property type="entry name" value="D-galactonate dehydratase family member VSWAT3_13707"/>
    <property type="match status" value="1"/>
</dbReference>
<dbReference type="Gene3D" id="3.20.20.120">
    <property type="entry name" value="Enolase-like C-terminal domain"/>
    <property type="match status" value="1"/>
</dbReference>
<dbReference type="Gene3D" id="3.30.390.10">
    <property type="entry name" value="Enolase-like, N-terminal domain"/>
    <property type="match status" value="1"/>
</dbReference>
<dbReference type="InterPro" id="IPR034593">
    <property type="entry name" value="DgoD-like"/>
</dbReference>
<dbReference type="InterPro" id="IPR036849">
    <property type="entry name" value="Enolase-like_C_sf"/>
</dbReference>
<dbReference type="InterPro" id="IPR029017">
    <property type="entry name" value="Enolase-like_N"/>
</dbReference>
<dbReference type="InterPro" id="IPR029065">
    <property type="entry name" value="Enolase_C-like"/>
</dbReference>
<dbReference type="InterPro" id="IPR018110">
    <property type="entry name" value="Mandel_Rmase/mucon_lact_enz_CS"/>
</dbReference>
<dbReference type="InterPro" id="IPR013342">
    <property type="entry name" value="Mandelate_racemase_C"/>
</dbReference>
<dbReference type="InterPro" id="IPR013341">
    <property type="entry name" value="Mandelate_racemase_N_dom"/>
</dbReference>
<dbReference type="PANTHER" id="PTHR48080">
    <property type="entry name" value="D-GALACTONATE DEHYDRATASE-RELATED"/>
    <property type="match status" value="1"/>
</dbReference>
<dbReference type="PANTHER" id="PTHR48080:SF6">
    <property type="entry name" value="STARVATION-SENSING PROTEIN RSPA"/>
    <property type="match status" value="1"/>
</dbReference>
<dbReference type="Pfam" id="PF13378">
    <property type="entry name" value="MR_MLE_C"/>
    <property type="match status" value="1"/>
</dbReference>
<dbReference type="Pfam" id="PF02746">
    <property type="entry name" value="MR_MLE_N"/>
    <property type="match status" value="1"/>
</dbReference>
<dbReference type="SFLD" id="SFLDS00001">
    <property type="entry name" value="Enolase"/>
    <property type="match status" value="1"/>
</dbReference>
<dbReference type="SMART" id="SM00922">
    <property type="entry name" value="MR_MLE"/>
    <property type="match status" value="1"/>
</dbReference>
<dbReference type="SUPFAM" id="SSF51604">
    <property type="entry name" value="Enolase C-terminal domain-like"/>
    <property type="match status" value="1"/>
</dbReference>
<dbReference type="SUPFAM" id="SSF54826">
    <property type="entry name" value="Enolase N-terminal domain-like"/>
    <property type="match status" value="1"/>
</dbReference>
<dbReference type="PROSITE" id="PS00908">
    <property type="entry name" value="MR_MLE_1"/>
    <property type="match status" value="1"/>
</dbReference>
<dbReference type="PROSITE" id="PS00909">
    <property type="entry name" value="MR_MLE_2"/>
    <property type="match status" value="1"/>
</dbReference>
<evidence type="ECO:0000250" key="1"/>
<evidence type="ECO:0000269" key="2">
    <source>
    </source>
</evidence>
<evidence type="ECO:0000305" key="3"/>
<evidence type="ECO:0007829" key="4">
    <source>
        <dbReference type="PDB" id="3T6C"/>
    </source>
</evidence>
<protein>
    <recommendedName>
        <fullName>D-galactonate dehydratase family member RspA</fullName>
        <ecNumber>4.2.1.-</ecNumber>
    </recommendedName>
    <alternativeName>
        <fullName>D-gluconate dehydratase</fullName>
        <ecNumber>4.2.1.39</ecNumber>
    </alternativeName>
    <alternativeName>
        <fullName>Starvation sensing protein RspA homolog</fullName>
    </alternativeName>
</protein>
<keyword id="KW-0002">3D-structure</keyword>
<keyword id="KW-0456">Lyase</keyword>
<keyword id="KW-0460">Magnesium</keyword>
<keyword id="KW-0479">Metal-binding</keyword>
<keyword id="KW-1185">Reference proteome</keyword>
<feature type="chain" id="PRO_0000429897" description="D-galactonate dehydratase family member RspA">
    <location>
        <begin position="1"/>
        <end position="417"/>
    </location>
</feature>
<feature type="active site" description="Proton donor/acceptor" evidence="1">
    <location>
        <position position="158"/>
    </location>
</feature>
<feature type="active site" description="Proton donor/acceptor" evidence="1">
    <location>
        <position position="225"/>
    </location>
</feature>
<feature type="binding site">
    <location>
        <position position="43"/>
    </location>
    <ligand>
        <name>substrate</name>
    </ligand>
</feature>
<feature type="binding site" evidence="1">
    <location>
        <position position="127"/>
    </location>
    <ligand>
        <name>substrate</name>
    </ligand>
</feature>
<feature type="binding site" evidence="2">
    <location>
        <position position="223"/>
    </location>
    <ligand>
        <name>Mg(2+)</name>
        <dbReference type="ChEBI" id="CHEBI:18420"/>
    </ligand>
</feature>
<feature type="binding site" evidence="2">
    <location>
        <position position="249"/>
    </location>
    <ligand>
        <name>Mg(2+)</name>
        <dbReference type="ChEBI" id="CHEBI:18420"/>
    </ligand>
</feature>
<feature type="binding site" evidence="2">
    <location>
        <position position="275"/>
    </location>
    <ligand>
        <name>Mg(2+)</name>
        <dbReference type="ChEBI" id="CHEBI:18420"/>
    </ligand>
</feature>
<feature type="binding site">
    <location>
        <position position="275"/>
    </location>
    <ligand>
        <name>substrate</name>
    </ligand>
</feature>
<feature type="binding site">
    <location>
        <position position="296"/>
    </location>
    <ligand>
        <name>substrate</name>
    </ligand>
</feature>
<feature type="binding site">
    <location>
        <position position="325"/>
    </location>
    <ligand>
        <name>substrate</name>
    </ligand>
</feature>
<feature type="binding site">
    <location>
        <position position="329"/>
    </location>
    <ligand>
        <name>substrate</name>
    </ligand>
</feature>
<feature type="binding site">
    <location>
        <position position="352"/>
    </location>
    <ligand>
        <name>substrate</name>
    </ligand>
</feature>
<feature type="site" description="Important for activity and substrate specificity; Pro is observed in family members with low D-mannonate dehydratase activity" evidence="1">
    <location>
        <position position="327"/>
    </location>
</feature>
<feature type="strand" evidence="4">
    <location>
        <begin position="6"/>
        <end position="14"/>
    </location>
</feature>
<feature type="strand" evidence="4">
    <location>
        <begin position="21"/>
        <end position="30"/>
    </location>
</feature>
<feature type="strand" evidence="4">
    <location>
        <begin position="34"/>
        <end position="38"/>
    </location>
</feature>
<feature type="helix" evidence="4">
    <location>
        <begin position="42"/>
        <end position="44"/>
    </location>
</feature>
<feature type="helix" evidence="4">
    <location>
        <begin position="45"/>
        <end position="53"/>
    </location>
</feature>
<feature type="helix" evidence="4">
    <location>
        <begin position="56"/>
        <end position="60"/>
    </location>
</feature>
<feature type="helix" evidence="4">
    <location>
        <begin position="68"/>
        <end position="77"/>
    </location>
</feature>
<feature type="helix" evidence="4">
    <location>
        <begin position="85"/>
        <end position="106"/>
    </location>
</feature>
<feature type="helix" evidence="4">
    <location>
        <begin position="110"/>
        <end position="113"/>
    </location>
</feature>
<feature type="strand" evidence="4">
    <location>
        <begin position="120"/>
        <end position="128"/>
    </location>
</feature>
<feature type="helix" evidence="4">
    <location>
        <begin position="133"/>
        <end position="145"/>
    </location>
</feature>
<feature type="strand" evidence="4">
    <location>
        <begin position="149"/>
        <end position="153"/>
    </location>
</feature>
<feature type="strand" evidence="4">
    <location>
        <begin position="155"/>
        <end position="158"/>
    </location>
</feature>
<feature type="turn" evidence="4">
    <location>
        <begin position="166"/>
        <end position="169"/>
    </location>
</feature>
<feature type="strand" evidence="4">
    <location>
        <begin position="190"/>
        <end position="193"/>
    </location>
</feature>
<feature type="helix" evidence="4">
    <location>
        <begin position="196"/>
        <end position="214"/>
    </location>
</feature>
<feature type="strand" evidence="4">
    <location>
        <begin position="216"/>
        <end position="223"/>
    </location>
</feature>
<feature type="helix" evidence="4">
    <location>
        <begin position="230"/>
        <end position="239"/>
    </location>
</feature>
<feature type="helix" evidence="4">
    <location>
        <begin position="241"/>
        <end position="243"/>
    </location>
</feature>
<feature type="strand" evidence="4">
    <location>
        <begin position="246"/>
        <end position="249"/>
    </location>
</feature>
<feature type="helix" evidence="4">
    <location>
        <begin position="254"/>
        <end position="259"/>
    </location>
</feature>
<feature type="helix" evidence="4">
    <location>
        <begin position="260"/>
        <end position="266"/>
    </location>
</feature>
<feature type="strand" evidence="4">
    <location>
        <begin position="271"/>
        <end position="273"/>
    </location>
</feature>
<feature type="helix" evidence="4">
    <location>
        <begin position="280"/>
        <end position="288"/>
    </location>
</feature>
<feature type="strand" evidence="4">
    <location>
        <begin position="293"/>
        <end position="295"/>
    </location>
</feature>
<feature type="helix" evidence="4">
    <location>
        <begin position="299"/>
        <end position="302"/>
    </location>
</feature>
<feature type="helix" evidence="4">
    <location>
        <begin position="305"/>
        <end position="317"/>
    </location>
</feature>
<feature type="strand" evidence="4">
    <location>
        <begin position="327"/>
        <end position="330"/>
    </location>
</feature>
<feature type="helix" evidence="4">
    <location>
        <begin position="332"/>
        <end position="344"/>
    </location>
</feature>
<feature type="helix" evidence="4">
    <location>
        <begin position="358"/>
        <end position="363"/>
    </location>
</feature>
<feature type="strand" evidence="4">
    <location>
        <begin position="369"/>
        <end position="371"/>
    </location>
</feature>
<feature type="strand" evidence="4">
    <location>
        <begin position="374"/>
        <end position="376"/>
    </location>
</feature>
<feature type="helix" evidence="4">
    <location>
        <begin position="389"/>
        <end position="392"/>
    </location>
</feature>